<dbReference type="EC" id="3.1.4.35" evidence="2"/>
<dbReference type="EMBL" id="D89093">
    <property type="protein sequence ID" value="BAA23672.1"/>
    <property type="molecule type" value="mRNA"/>
</dbReference>
<dbReference type="RefSeq" id="NP_598268.1">
    <molecule id="O54735-1"/>
    <property type="nucleotide sequence ID" value="NM_133584.1"/>
</dbReference>
<dbReference type="SMR" id="O54735"/>
<dbReference type="FunCoup" id="O54735">
    <property type="interactions" value="869"/>
</dbReference>
<dbReference type="STRING" id="10116.ENSRNOP00000019637"/>
<dbReference type="BindingDB" id="O54735"/>
<dbReference type="ChEMBL" id="CHEMBL4567"/>
<dbReference type="DrugCentral" id="O54735"/>
<dbReference type="iPTMnet" id="O54735"/>
<dbReference type="PhosphoSitePlus" id="O54735"/>
<dbReference type="PaxDb" id="10116-ENSRNOP00000019637"/>
<dbReference type="GeneID" id="171115"/>
<dbReference type="KEGG" id="rno:171115"/>
<dbReference type="UCSC" id="RGD:620995">
    <molecule id="O54735-1"/>
    <property type="organism name" value="rat"/>
</dbReference>
<dbReference type="AGR" id="RGD:620995"/>
<dbReference type="CTD" id="8654"/>
<dbReference type="RGD" id="620995">
    <property type="gene designation" value="Pde5a"/>
</dbReference>
<dbReference type="eggNOG" id="KOG3689">
    <property type="taxonomic scope" value="Eukaryota"/>
</dbReference>
<dbReference type="InParanoid" id="O54735"/>
<dbReference type="OrthoDB" id="74705at2759"/>
<dbReference type="PhylomeDB" id="O54735"/>
<dbReference type="BRENDA" id="3.1.4.35">
    <property type="organism ID" value="5301"/>
</dbReference>
<dbReference type="Reactome" id="R-RNO-418457">
    <property type="pathway name" value="cGMP effects"/>
</dbReference>
<dbReference type="Reactome" id="R-RNO-445355">
    <property type="pathway name" value="Smooth Muscle Contraction"/>
</dbReference>
<dbReference type="Reactome" id="R-RNO-9013422">
    <property type="pathway name" value="RHOBTB1 GTPase cycle"/>
</dbReference>
<dbReference type="SABIO-RK" id="O54735"/>
<dbReference type="UniPathway" id="UPA00763">
    <property type="reaction ID" value="UER00748"/>
</dbReference>
<dbReference type="PRO" id="PR:O54735"/>
<dbReference type="Proteomes" id="UP000002494">
    <property type="component" value="Unplaced"/>
</dbReference>
<dbReference type="GO" id="GO:0004115">
    <property type="term" value="F:3',5'-cyclic-AMP phosphodiesterase activity"/>
    <property type="evidence" value="ECO:0000318"/>
    <property type="project" value="GO_Central"/>
</dbReference>
<dbReference type="GO" id="GO:0047555">
    <property type="term" value="F:3',5'-cyclic-GMP phosphodiesterase activity"/>
    <property type="evidence" value="ECO:0000314"/>
    <property type="project" value="RGD"/>
</dbReference>
<dbReference type="GO" id="GO:0004114">
    <property type="term" value="F:3',5'-cyclic-nucleotide phosphodiesterase activity"/>
    <property type="evidence" value="ECO:0000266"/>
    <property type="project" value="RGD"/>
</dbReference>
<dbReference type="GO" id="GO:0030553">
    <property type="term" value="F:cGMP binding"/>
    <property type="evidence" value="ECO:0000266"/>
    <property type="project" value="RGD"/>
</dbReference>
<dbReference type="GO" id="GO:0004112">
    <property type="term" value="F:cyclic-nucleotide phosphodiesterase activity"/>
    <property type="evidence" value="ECO:0000266"/>
    <property type="project" value="RGD"/>
</dbReference>
<dbReference type="GO" id="GO:0046872">
    <property type="term" value="F:metal ion binding"/>
    <property type="evidence" value="ECO:0007669"/>
    <property type="project" value="UniProtKB-KW"/>
</dbReference>
<dbReference type="GO" id="GO:0019933">
    <property type="term" value="P:cAMP-mediated signaling"/>
    <property type="evidence" value="ECO:0000318"/>
    <property type="project" value="GO_Central"/>
</dbReference>
<dbReference type="GO" id="GO:0046069">
    <property type="term" value="P:cGMP catabolic process"/>
    <property type="evidence" value="ECO:0000266"/>
    <property type="project" value="RGD"/>
</dbReference>
<dbReference type="GO" id="GO:0046068">
    <property type="term" value="P:cGMP metabolic process"/>
    <property type="evidence" value="ECO:0000266"/>
    <property type="project" value="RGD"/>
</dbReference>
<dbReference type="GO" id="GO:0055118">
    <property type="term" value="P:negative regulation of cardiac muscle contraction"/>
    <property type="evidence" value="ECO:0000266"/>
    <property type="project" value="RGD"/>
</dbReference>
<dbReference type="GO" id="GO:0042130">
    <property type="term" value="P:negative regulation of T cell proliferation"/>
    <property type="evidence" value="ECO:0000266"/>
    <property type="project" value="RGD"/>
</dbReference>
<dbReference type="GO" id="GO:0007399">
    <property type="term" value="P:nervous system development"/>
    <property type="evidence" value="ECO:0000270"/>
    <property type="project" value="RGD"/>
</dbReference>
<dbReference type="GO" id="GO:0048599">
    <property type="term" value="P:oocyte development"/>
    <property type="evidence" value="ECO:0000266"/>
    <property type="project" value="RGD"/>
</dbReference>
<dbReference type="GO" id="GO:0043065">
    <property type="term" value="P:positive regulation of apoptotic process"/>
    <property type="evidence" value="ECO:0000315"/>
    <property type="project" value="RGD"/>
</dbReference>
<dbReference type="GO" id="GO:0010613">
    <property type="term" value="P:positive regulation of cardiac muscle hypertrophy"/>
    <property type="evidence" value="ECO:0000266"/>
    <property type="project" value="RGD"/>
</dbReference>
<dbReference type="GO" id="GO:0002678">
    <property type="term" value="P:positive regulation of chronic inflammatory response"/>
    <property type="evidence" value="ECO:0000315"/>
    <property type="project" value="RGD"/>
</dbReference>
<dbReference type="GO" id="GO:0060282">
    <property type="term" value="P:positive regulation of oocyte development"/>
    <property type="evidence" value="ECO:0000266"/>
    <property type="project" value="RGD"/>
</dbReference>
<dbReference type="GO" id="GO:0045907">
    <property type="term" value="P:positive regulation of vasoconstriction"/>
    <property type="evidence" value="ECO:0000315"/>
    <property type="project" value="RGD"/>
</dbReference>
<dbReference type="GO" id="GO:0010749">
    <property type="term" value="P:regulation of nitric oxide mediated signal transduction"/>
    <property type="evidence" value="ECO:0000266"/>
    <property type="project" value="RGD"/>
</dbReference>
<dbReference type="GO" id="GO:0002026">
    <property type="term" value="P:regulation of the force of heart contraction"/>
    <property type="evidence" value="ECO:0000315"/>
    <property type="project" value="RGD"/>
</dbReference>
<dbReference type="GO" id="GO:0055119">
    <property type="term" value="P:relaxation of cardiac muscle"/>
    <property type="evidence" value="ECO:0000266"/>
    <property type="project" value="RGD"/>
</dbReference>
<dbReference type="GO" id="GO:0001666">
    <property type="term" value="P:response to hypoxia"/>
    <property type="evidence" value="ECO:0000270"/>
    <property type="project" value="RGD"/>
</dbReference>
<dbReference type="GO" id="GO:0032496">
    <property type="term" value="P:response to lipopolysaccharide"/>
    <property type="evidence" value="ECO:0000270"/>
    <property type="project" value="RGD"/>
</dbReference>
<dbReference type="GO" id="GO:0033574">
    <property type="term" value="P:response to testosterone"/>
    <property type="evidence" value="ECO:0000270"/>
    <property type="project" value="RGD"/>
</dbReference>
<dbReference type="GO" id="GO:0007614">
    <property type="term" value="P:short-term memory"/>
    <property type="evidence" value="ECO:0000315"/>
    <property type="project" value="RGD"/>
</dbReference>
<dbReference type="GO" id="GO:0042098">
    <property type="term" value="P:T cell proliferation"/>
    <property type="evidence" value="ECO:0000266"/>
    <property type="project" value="RGD"/>
</dbReference>
<dbReference type="GO" id="GO:0042311">
    <property type="term" value="P:vasodilation"/>
    <property type="evidence" value="ECO:0000270"/>
    <property type="project" value="RGD"/>
</dbReference>
<dbReference type="CDD" id="cd00077">
    <property type="entry name" value="HDc"/>
    <property type="match status" value="1"/>
</dbReference>
<dbReference type="FunFam" id="1.10.1300.10:FF:000003">
    <property type="entry name" value="Phosphodiesterase"/>
    <property type="match status" value="1"/>
</dbReference>
<dbReference type="FunFam" id="3.30.450.40:FF:000004">
    <property type="entry name" value="Phosphodiesterase"/>
    <property type="match status" value="1"/>
</dbReference>
<dbReference type="FunFam" id="3.30.450.40:FF:000015">
    <property type="entry name" value="Phosphodiesterase"/>
    <property type="match status" value="1"/>
</dbReference>
<dbReference type="Gene3D" id="3.30.450.40">
    <property type="match status" value="2"/>
</dbReference>
<dbReference type="Gene3D" id="1.10.1300.10">
    <property type="entry name" value="3'5'-cyclic nucleotide phosphodiesterase, catalytic domain"/>
    <property type="match status" value="1"/>
</dbReference>
<dbReference type="InterPro" id="IPR003018">
    <property type="entry name" value="GAF"/>
</dbReference>
<dbReference type="InterPro" id="IPR029016">
    <property type="entry name" value="GAF-like_dom_sf"/>
</dbReference>
<dbReference type="InterPro" id="IPR003607">
    <property type="entry name" value="HD/PDEase_dom"/>
</dbReference>
<dbReference type="InterPro" id="IPR023088">
    <property type="entry name" value="PDEase"/>
</dbReference>
<dbReference type="InterPro" id="IPR002073">
    <property type="entry name" value="PDEase_catalytic_dom"/>
</dbReference>
<dbReference type="InterPro" id="IPR036971">
    <property type="entry name" value="PDEase_catalytic_dom_sf"/>
</dbReference>
<dbReference type="InterPro" id="IPR023174">
    <property type="entry name" value="PDEase_CS"/>
</dbReference>
<dbReference type="PANTHER" id="PTHR11347">
    <property type="entry name" value="CYCLIC NUCLEOTIDE PHOSPHODIESTERASE"/>
    <property type="match status" value="1"/>
</dbReference>
<dbReference type="Pfam" id="PF01590">
    <property type="entry name" value="GAF"/>
    <property type="match status" value="2"/>
</dbReference>
<dbReference type="Pfam" id="PF00233">
    <property type="entry name" value="PDEase_I"/>
    <property type="match status" value="1"/>
</dbReference>
<dbReference type="PRINTS" id="PR00387">
    <property type="entry name" value="PDIESTERASE1"/>
</dbReference>
<dbReference type="SMART" id="SM00065">
    <property type="entry name" value="GAF"/>
    <property type="match status" value="2"/>
</dbReference>
<dbReference type="SMART" id="SM00471">
    <property type="entry name" value="HDc"/>
    <property type="match status" value="1"/>
</dbReference>
<dbReference type="SUPFAM" id="SSF55781">
    <property type="entry name" value="GAF domain-like"/>
    <property type="match status" value="2"/>
</dbReference>
<dbReference type="SUPFAM" id="SSF109604">
    <property type="entry name" value="HD-domain/PDEase-like"/>
    <property type="match status" value="1"/>
</dbReference>
<dbReference type="PROSITE" id="PS00126">
    <property type="entry name" value="PDEASE_I_1"/>
    <property type="match status" value="1"/>
</dbReference>
<dbReference type="PROSITE" id="PS51845">
    <property type="entry name" value="PDEASE_I_2"/>
    <property type="match status" value="1"/>
</dbReference>
<reference key="1">
    <citation type="journal article" date="1997" name="Eur. J. Biochem.">
        <title>Expression of rat cGMP-binding cGMP-specific phosphodiesterase mRNA in Purkinje cell layers during postnatal neuronal development.</title>
        <authorList>
            <person name="Kotera J."/>
            <person name="Yanaka N."/>
            <person name="Fujishige K."/>
            <person name="Imai Y."/>
            <person name="Akatsuka H."/>
            <person name="Ishizuka T."/>
            <person name="Kawashima K."/>
            <person name="Omori K."/>
        </authorList>
    </citation>
    <scope>NUCLEOTIDE SEQUENCE [MRNA]</scope>
    <source>
        <strain>Sprague-Dawley</strain>
        <tissue>Lung</tissue>
    </source>
</reference>
<comment type="function">
    <text evidence="2">Plays a role in signal transduction by regulating the intracellular concentration of cyclic nucleotides. This phosphodiesterase catalyzes the specific hydrolysis of cGMP to 5'-GMP. Specifically regulates nitric-oxide-generated cGMP.</text>
</comment>
<comment type="catalytic activity">
    <reaction evidence="2">
        <text>3',5'-cyclic GMP + H2O = GMP + H(+)</text>
        <dbReference type="Rhea" id="RHEA:16957"/>
        <dbReference type="ChEBI" id="CHEBI:15377"/>
        <dbReference type="ChEBI" id="CHEBI:15378"/>
        <dbReference type="ChEBI" id="CHEBI:57746"/>
        <dbReference type="ChEBI" id="CHEBI:58115"/>
        <dbReference type="EC" id="3.1.4.35"/>
    </reaction>
    <physiologicalReaction direction="left-to-right" evidence="2">
        <dbReference type="Rhea" id="RHEA:16958"/>
    </physiologicalReaction>
</comment>
<comment type="cofactor">
    <cofactor evidence="2">
        <name>Zn(2+)</name>
        <dbReference type="ChEBI" id="CHEBI:29105"/>
    </cofactor>
    <text evidence="2">Binds 1 Zn(2+) ion per subunit. Binds 2 divalent metal cations per subunit: site 1 preferentially binds zinc, while site 2 has a preference for magnesium. Tightly binds zinc.</text>
</comment>
<comment type="cofactor">
    <cofactor evidence="2">
        <name>Mg(2+)</name>
        <dbReference type="ChEBI" id="CHEBI:18420"/>
    </cofactor>
    <text evidence="2">Binds 1 Mg(2+) ions per subunit. Binds 2 divalent metal cations per subunit: site 1 preferentially binds zinc, while site 2 has a preference for magnesium. Binds magnesium less tightly than zinc.</text>
</comment>
<comment type="pathway">
    <text>Purine metabolism; 3',5'-cyclic GMP degradation; GMP from 3',5'-cyclic GMP: step 1/1.</text>
</comment>
<comment type="alternative products">
    <event type="alternative splicing"/>
    <isoform>
        <id>O54735-1</id>
        <name>PDE5A2</name>
        <sequence type="displayed"/>
    </isoform>
    <isoform>
        <id>O54735-2</id>
        <name>PDE5A1</name>
        <sequence type="not described"/>
    </isoform>
</comment>
<comment type="domain">
    <text>Composed of a C-terminal catalytic domain containing two putative divalent metal sites and an N-terminal regulatory domain which contains two homologous allosteric cGMP-binding regions, A and B.</text>
</comment>
<comment type="PTM">
    <text evidence="1">Phosphorylation is regulated by binding of cGMP to the two allosteric sites. Phosphorylation by PRKG1 leads to its activation.</text>
</comment>
<comment type="similarity">
    <text evidence="7">Belongs to the cyclic nucleotide phosphodiesterase family.</text>
</comment>
<name>PDE5A_RAT</name>
<accession>O54735</accession>
<organism>
    <name type="scientific">Rattus norvegicus</name>
    <name type="common">Rat</name>
    <dbReference type="NCBI Taxonomy" id="10116"/>
    <lineage>
        <taxon>Eukaryota</taxon>
        <taxon>Metazoa</taxon>
        <taxon>Chordata</taxon>
        <taxon>Craniata</taxon>
        <taxon>Vertebrata</taxon>
        <taxon>Euteleostomi</taxon>
        <taxon>Mammalia</taxon>
        <taxon>Eutheria</taxon>
        <taxon>Euarchontoglires</taxon>
        <taxon>Glires</taxon>
        <taxon>Rodentia</taxon>
        <taxon>Myomorpha</taxon>
        <taxon>Muroidea</taxon>
        <taxon>Muridae</taxon>
        <taxon>Murinae</taxon>
        <taxon>Rattus</taxon>
    </lineage>
</organism>
<keyword id="KW-0021">Allosteric enzyme</keyword>
<keyword id="KW-0025">Alternative splicing</keyword>
<keyword id="KW-0140">cGMP</keyword>
<keyword id="KW-0142">cGMP-binding</keyword>
<keyword id="KW-0378">Hydrolase</keyword>
<keyword id="KW-0460">Magnesium</keyword>
<keyword id="KW-0479">Metal-binding</keyword>
<keyword id="KW-0547">Nucleotide-binding</keyword>
<keyword id="KW-0597">Phosphoprotein</keyword>
<keyword id="KW-1185">Reference proteome</keyword>
<keyword id="KW-0677">Repeat</keyword>
<keyword id="KW-0862">Zinc</keyword>
<sequence>MLPFGDKTRDMVNAWFSERVHNIPVCKEGIRAHTESCSCSLPQSPHADNTTPGAPARKISASEFDRPLRPIVVKDSEGTVSFLSDSGKKEQMPLTSPRFDSDEGDQCSRLLELVKDISSHLDVTALCHKIFLHIHGLISADRYSLFLVCEDSSKDKFLVSRLFDVAEGSTLEEASNNCIRLEWNKGIVGHVAAFGEPLNIKDAYEDPRFNAEVDQITGYKTQSILCMPIKNHREEVVGVAQAINKKSGNGGTFTEKDEKDFAAYLAFCGIVLHNAQLYETSLLENKRNQVLLDLASLIFEEQQSLEVILKKIAATIISFMQVQKCTIFIVDEDCPDSFSRVFQMEWEEVGKSSEPLTREHDANKINYMYAQYVKNTMEPLNIPDVTKDNRFPWTNENMGHINTHCIRSLLCTPIKNGKKNKVIGVCQLVNKMEEKTGKIKAFNQNDEQFLEAFVIFCGLGIQNTQMYEAVERAMAKQMVTLEVLSYHASAAEEETRELQALAAAVVPSAQTLKITDFSFSDFELSDLETALCTIRMFTDLNLVQNFQMKHEVLCRWILSVKKNYRKNVAYHNWRHAFNTAQCMFAALKAGKIQNKLTDLETLALLIAALSHDLDHRGVNNSYIQRSEHPLAQLYCHSTMEHHHFDQCLMVLNSPGNQILSGLSIEEYKTTLKIIKQAILATDLALYIKRRGEFFELIRKNEFSFEDPLQKELFLAMLMTACDLSAITKPWPIQQRIAELVAAEFFDQGDRERKELNMEPADLMNREKKNKIPSMQVGFIDAICLQLYEALTHVSEDCLPLLDGCRKNRQKWQALADQQEKTLLNGESGQAKRD</sequence>
<gene>
    <name type="primary">Pde5a</name>
    <name type="synonym">Pde5</name>
</gene>
<evidence type="ECO:0000250" key="1"/>
<evidence type="ECO:0000250" key="2">
    <source>
        <dbReference type="UniProtKB" id="O76074"/>
    </source>
</evidence>
<evidence type="ECO:0000250" key="3">
    <source>
        <dbReference type="UniProtKB" id="O76083"/>
    </source>
</evidence>
<evidence type="ECO:0000255" key="4"/>
<evidence type="ECO:0000255" key="5">
    <source>
        <dbReference type="PROSITE-ProRule" id="PRU01192"/>
    </source>
</evidence>
<evidence type="ECO:0000256" key="6">
    <source>
        <dbReference type="SAM" id="MobiDB-lite"/>
    </source>
</evidence>
<evidence type="ECO:0000305" key="7"/>
<feature type="chain" id="PRO_0000198825" description="cGMP-specific 3',5'-cyclic phosphodiesterase">
    <location>
        <begin position="1"/>
        <end position="833"/>
    </location>
</feature>
<feature type="domain" description="GAF 1">
    <location>
        <begin position="122"/>
        <end position="272"/>
    </location>
</feature>
<feature type="domain" description="GAF 2">
    <location>
        <begin position="304"/>
        <end position="461"/>
    </location>
</feature>
<feature type="domain" description="PDEase" evidence="5">
    <location>
        <begin position="494"/>
        <end position="818"/>
    </location>
</feature>
<feature type="region of interest" description="Disordered" evidence="6">
    <location>
        <begin position="82"/>
        <end position="101"/>
    </location>
</feature>
<feature type="active site" description="Proton donor" evidence="3">
    <location>
        <position position="571"/>
    </location>
</feature>
<feature type="binding site" evidence="2">
    <location>
        <position position="575"/>
    </location>
    <ligand>
        <name>Zn(2+)</name>
        <dbReference type="ChEBI" id="CHEBI:29105"/>
    </ligand>
</feature>
<feature type="binding site" evidence="2">
    <location>
        <position position="611"/>
    </location>
    <ligand>
        <name>Zn(2+)</name>
        <dbReference type="ChEBI" id="CHEBI:29105"/>
    </ligand>
</feature>
<feature type="binding site" evidence="2">
    <location>
        <position position="612"/>
    </location>
    <ligand>
        <name>Mg(2+)</name>
        <dbReference type="ChEBI" id="CHEBI:18420"/>
    </ligand>
</feature>
<feature type="binding site" evidence="2">
    <location>
        <position position="612"/>
    </location>
    <ligand>
        <name>Zn(2+)</name>
        <dbReference type="ChEBI" id="CHEBI:29105"/>
    </ligand>
</feature>
<feature type="binding site" evidence="2">
    <location>
        <position position="722"/>
    </location>
    <ligand>
        <name>Zn(2+)</name>
        <dbReference type="ChEBI" id="CHEBI:29105"/>
    </ligand>
</feature>
<feature type="binding site" evidence="2">
    <location>
        <position position="775"/>
    </location>
    <ligand>
        <name>3',5'-cyclic GMP</name>
        <dbReference type="ChEBI" id="CHEBI:57746"/>
    </ligand>
</feature>
<feature type="modified residue" description="Phosphoserine" evidence="4">
    <location>
        <position position="60"/>
    </location>
</feature>
<protein>
    <recommendedName>
        <fullName>cGMP-specific 3',5'-cyclic phosphodiesterase</fullName>
        <ecNumber evidence="2">3.1.4.35</ecNumber>
    </recommendedName>
    <alternativeName>
        <fullName>cGMP-binding cGMP-specific phosphodiesterase</fullName>
        <shortName>CGB-PDE</shortName>
    </alternativeName>
</protein>
<proteinExistence type="evidence at transcript level"/>